<proteinExistence type="inferred from homology"/>
<protein>
    <recommendedName>
        <fullName evidence="1">Trigger factor</fullName>
        <shortName evidence="1">TF</shortName>
        <ecNumber evidence="1">5.2.1.8</ecNumber>
    </recommendedName>
    <alternativeName>
        <fullName evidence="1">PPIase</fullName>
    </alternativeName>
</protein>
<evidence type="ECO:0000255" key="1">
    <source>
        <dbReference type="HAMAP-Rule" id="MF_00303"/>
    </source>
</evidence>
<evidence type="ECO:0000256" key="2">
    <source>
        <dbReference type="SAM" id="MobiDB-lite"/>
    </source>
</evidence>
<accession>A2C5R7</accession>
<feature type="chain" id="PRO_1000022728" description="Trigger factor">
    <location>
        <begin position="1"/>
        <end position="479"/>
    </location>
</feature>
<feature type="domain" description="PPIase FKBP-type" evidence="1">
    <location>
        <begin position="174"/>
        <end position="261"/>
    </location>
</feature>
<feature type="region of interest" description="Disordered" evidence="2">
    <location>
        <begin position="437"/>
        <end position="479"/>
    </location>
</feature>
<feature type="compositionally biased region" description="Basic residues" evidence="2">
    <location>
        <begin position="453"/>
        <end position="466"/>
    </location>
</feature>
<feature type="compositionally biased region" description="Basic and acidic residues" evidence="2">
    <location>
        <begin position="467"/>
        <end position="479"/>
    </location>
</feature>
<comment type="function">
    <text evidence="1">Involved in protein export. Acts as a chaperone by maintaining the newly synthesized protein in an open conformation. Functions as a peptidyl-prolyl cis-trans isomerase.</text>
</comment>
<comment type="catalytic activity">
    <reaction evidence="1">
        <text>[protein]-peptidylproline (omega=180) = [protein]-peptidylproline (omega=0)</text>
        <dbReference type="Rhea" id="RHEA:16237"/>
        <dbReference type="Rhea" id="RHEA-COMP:10747"/>
        <dbReference type="Rhea" id="RHEA-COMP:10748"/>
        <dbReference type="ChEBI" id="CHEBI:83833"/>
        <dbReference type="ChEBI" id="CHEBI:83834"/>
        <dbReference type="EC" id="5.2.1.8"/>
    </reaction>
</comment>
<comment type="subcellular location">
    <subcellularLocation>
        <location>Cytoplasm</location>
    </subcellularLocation>
    <text evidence="1">About half TF is bound to the ribosome near the polypeptide exit tunnel while the other half is free in the cytoplasm.</text>
</comment>
<comment type="domain">
    <text evidence="1">Consists of 3 domains; the N-terminus binds the ribosome, the middle domain has PPIase activity, while the C-terminus has intrinsic chaperone activity on its own.</text>
</comment>
<comment type="similarity">
    <text evidence="1">Belongs to the FKBP-type PPIase family. Tig subfamily.</text>
</comment>
<sequence length="479" mass="52852">MSATALQVKTTQKPNSRLALEVAVPAERCQANYEAAVTRLSRTINLPGFRKGKVPRAVLLQQIGLVRIRATALETLVDAVWREVLEQESIEPLCEPELSGGFDALLESFQPGEALTLILETDVTPTPKLKATKGLQAEAEVVTFDPSKVDELIEQSRKQLATLVPVESRPAAIGDIAVVSFSGTYDDDGSAIEGGSSESMDVDLEDGQMIPGFVEGIIGMSLGSEKTVDCHFPDDYSKEDARGRKASFVINLKELKTRELPDLDDAFAQQSSDKATLEELRNDLEQRLQEDAKRRDRSNRHDALLEALTEQLEVDLPNTLVQQEIRNLVEQTASQFAQQGMDVKSMFTPELVRSLMESSRPEAEERLRRSLALTALAESEDLKIEESEISAKVKEVSRELSGERDIDPARLRQAVSDDLLKDKLLDWLEDNSTITEKVLESEAKTSKPAAKSKGSKTKSTKTKTNKAKTEKPASDKTKS</sequence>
<keyword id="KW-0131">Cell cycle</keyword>
<keyword id="KW-0132">Cell division</keyword>
<keyword id="KW-0143">Chaperone</keyword>
<keyword id="KW-0963">Cytoplasm</keyword>
<keyword id="KW-0413">Isomerase</keyword>
<keyword id="KW-0697">Rotamase</keyword>
<name>TIG_PROM3</name>
<reference key="1">
    <citation type="journal article" date="2007" name="PLoS Genet.">
        <title>Patterns and implications of gene gain and loss in the evolution of Prochlorococcus.</title>
        <authorList>
            <person name="Kettler G.C."/>
            <person name="Martiny A.C."/>
            <person name="Huang K."/>
            <person name="Zucker J."/>
            <person name="Coleman M.L."/>
            <person name="Rodrigue S."/>
            <person name="Chen F."/>
            <person name="Lapidus A."/>
            <person name="Ferriera S."/>
            <person name="Johnson J."/>
            <person name="Steglich C."/>
            <person name="Church G.M."/>
            <person name="Richardson P."/>
            <person name="Chisholm S.W."/>
        </authorList>
    </citation>
    <scope>NUCLEOTIDE SEQUENCE [LARGE SCALE GENOMIC DNA]</scope>
    <source>
        <strain>MIT 9303</strain>
    </source>
</reference>
<gene>
    <name evidence="1" type="primary">tig</name>
    <name type="ordered locus">P9303_00701</name>
</gene>
<organism>
    <name type="scientific">Prochlorococcus marinus (strain MIT 9303)</name>
    <dbReference type="NCBI Taxonomy" id="59922"/>
    <lineage>
        <taxon>Bacteria</taxon>
        <taxon>Bacillati</taxon>
        <taxon>Cyanobacteriota</taxon>
        <taxon>Cyanophyceae</taxon>
        <taxon>Synechococcales</taxon>
        <taxon>Prochlorococcaceae</taxon>
        <taxon>Prochlorococcus</taxon>
    </lineage>
</organism>
<dbReference type="EC" id="5.2.1.8" evidence="1"/>
<dbReference type="EMBL" id="CP000554">
    <property type="protein sequence ID" value="ABM76827.1"/>
    <property type="molecule type" value="Genomic_DNA"/>
</dbReference>
<dbReference type="RefSeq" id="WP_011824759.1">
    <property type="nucleotide sequence ID" value="NC_008820.1"/>
</dbReference>
<dbReference type="SMR" id="A2C5R7"/>
<dbReference type="STRING" id="59922.P9303_00701"/>
<dbReference type="KEGG" id="pmf:P9303_00701"/>
<dbReference type="HOGENOM" id="CLU_033058_3_1_3"/>
<dbReference type="BioCyc" id="PMAR59922:G1G80-68-MONOMER"/>
<dbReference type="Proteomes" id="UP000002274">
    <property type="component" value="Chromosome"/>
</dbReference>
<dbReference type="GO" id="GO:0005737">
    <property type="term" value="C:cytoplasm"/>
    <property type="evidence" value="ECO:0007669"/>
    <property type="project" value="UniProtKB-SubCell"/>
</dbReference>
<dbReference type="GO" id="GO:0003755">
    <property type="term" value="F:peptidyl-prolyl cis-trans isomerase activity"/>
    <property type="evidence" value="ECO:0007669"/>
    <property type="project" value="UniProtKB-UniRule"/>
</dbReference>
<dbReference type="GO" id="GO:0044183">
    <property type="term" value="F:protein folding chaperone"/>
    <property type="evidence" value="ECO:0007669"/>
    <property type="project" value="TreeGrafter"/>
</dbReference>
<dbReference type="GO" id="GO:0043022">
    <property type="term" value="F:ribosome binding"/>
    <property type="evidence" value="ECO:0007669"/>
    <property type="project" value="TreeGrafter"/>
</dbReference>
<dbReference type="GO" id="GO:0051083">
    <property type="term" value="P:'de novo' cotranslational protein folding"/>
    <property type="evidence" value="ECO:0007669"/>
    <property type="project" value="TreeGrafter"/>
</dbReference>
<dbReference type="GO" id="GO:0051301">
    <property type="term" value="P:cell division"/>
    <property type="evidence" value="ECO:0007669"/>
    <property type="project" value="UniProtKB-KW"/>
</dbReference>
<dbReference type="GO" id="GO:0061077">
    <property type="term" value="P:chaperone-mediated protein folding"/>
    <property type="evidence" value="ECO:0007669"/>
    <property type="project" value="TreeGrafter"/>
</dbReference>
<dbReference type="GO" id="GO:0015031">
    <property type="term" value="P:protein transport"/>
    <property type="evidence" value="ECO:0007669"/>
    <property type="project" value="UniProtKB-UniRule"/>
</dbReference>
<dbReference type="GO" id="GO:0043335">
    <property type="term" value="P:protein unfolding"/>
    <property type="evidence" value="ECO:0007669"/>
    <property type="project" value="TreeGrafter"/>
</dbReference>
<dbReference type="FunFam" id="3.10.50.40:FF:000001">
    <property type="entry name" value="Trigger factor"/>
    <property type="match status" value="1"/>
</dbReference>
<dbReference type="FunFam" id="3.30.70.1050:FF:000004">
    <property type="entry name" value="Trigger factor"/>
    <property type="match status" value="1"/>
</dbReference>
<dbReference type="Gene3D" id="3.10.50.40">
    <property type="match status" value="1"/>
</dbReference>
<dbReference type="Gene3D" id="3.30.70.1050">
    <property type="entry name" value="Trigger factor ribosome-binding domain"/>
    <property type="match status" value="1"/>
</dbReference>
<dbReference type="Gene3D" id="1.10.3120.10">
    <property type="entry name" value="Trigger factor, C-terminal domain"/>
    <property type="match status" value="1"/>
</dbReference>
<dbReference type="HAMAP" id="MF_00303">
    <property type="entry name" value="Trigger_factor_Tig"/>
    <property type="match status" value="1"/>
</dbReference>
<dbReference type="InterPro" id="IPR046357">
    <property type="entry name" value="PPIase_dom_sf"/>
</dbReference>
<dbReference type="InterPro" id="IPR001179">
    <property type="entry name" value="PPIase_FKBP_dom"/>
</dbReference>
<dbReference type="InterPro" id="IPR005215">
    <property type="entry name" value="Trig_fac"/>
</dbReference>
<dbReference type="InterPro" id="IPR008880">
    <property type="entry name" value="Trigger_fac_C"/>
</dbReference>
<dbReference type="InterPro" id="IPR037041">
    <property type="entry name" value="Trigger_fac_C_sf"/>
</dbReference>
<dbReference type="InterPro" id="IPR008881">
    <property type="entry name" value="Trigger_fac_ribosome-bd_bac"/>
</dbReference>
<dbReference type="InterPro" id="IPR036611">
    <property type="entry name" value="Trigger_fac_ribosome-bd_sf"/>
</dbReference>
<dbReference type="InterPro" id="IPR027304">
    <property type="entry name" value="Trigger_fact/SurA_dom_sf"/>
</dbReference>
<dbReference type="NCBIfam" id="TIGR00115">
    <property type="entry name" value="tig"/>
    <property type="match status" value="1"/>
</dbReference>
<dbReference type="PANTHER" id="PTHR30560">
    <property type="entry name" value="TRIGGER FACTOR CHAPERONE AND PEPTIDYL-PROLYL CIS/TRANS ISOMERASE"/>
    <property type="match status" value="1"/>
</dbReference>
<dbReference type="PANTHER" id="PTHR30560:SF3">
    <property type="entry name" value="TRIGGER FACTOR-LIKE PROTEIN TIG, CHLOROPLASTIC"/>
    <property type="match status" value="1"/>
</dbReference>
<dbReference type="Pfam" id="PF00254">
    <property type="entry name" value="FKBP_C"/>
    <property type="match status" value="1"/>
</dbReference>
<dbReference type="Pfam" id="PF05698">
    <property type="entry name" value="Trigger_C"/>
    <property type="match status" value="1"/>
</dbReference>
<dbReference type="Pfam" id="PF05697">
    <property type="entry name" value="Trigger_N"/>
    <property type="match status" value="1"/>
</dbReference>
<dbReference type="PIRSF" id="PIRSF003095">
    <property type="entry name" value="Trigger_factor"/>
    <property type="match status" value="1"/>
</dbReference>
<dbReference type="SUPFAM" id="SSF54534">
    <property type="entry name" value="FKBP-like"/>
    <property type="match status" value="1"/>
</dbReference>
<dbReference type="SUPFAM" id="SSF109998">
    <property type="entry name" value="Triger factor/SurA peptide-binding domain-like"/>
    <property type="match status" value="1"/>
</dbReference>
<dbReference type="SUPFAM" id="SSF102735">
    <property type="entry name" value="Trigger factor ribosome-binding domain"/>
    <property type="match status" value="1"/>
</dbReference>
<dbReference type="PROSITE" id="PS50059">
    <property type="entry name" value="FKBP_PPIASE"/>
    <property type="match status" value="1"/>
</dbReference>